<keyword id="KW-0158">Chromosome</keyword>
<keyword id="KW-0217">Developmental protein</keyword>
<keyword id="KW-0221">Differentiation</keyword>
<keyword id="KW-0226">DNA condensation</keyword>
<keyword id="KW-0238">DNA-binding</keyword>
<keyword id="KW-0544">Nucleosome core</keyword>
<keyword id="KW-0539">Nucleus</keyword>
<keyword id="KW-0744">Spermatogenesis</keyword>
<name>PRT4_ONCMY</name>
<comment type="function">
    <text>Protamines substitute for histones in the chromatin of sperm during the haploid phase of spermatogenesis. They compact sperm DNA into a highly condensed, stable and inactive complex.</text>
</comment>
<comment type="subcellular location">
    <subcellularLocation>
        <location>Nucleus</location>
    </subcellularLocation>
    <subcellularLocation>
        <location>Chromosome</location>
    </subcellularLocation>
</comment>
<comment type="tissue specificity">
    <text>Testis.</text>
</comment>
<evidence type="ECO:0000256" key="1">
    <source>
        <dbReference type="SAM" id="MobiDB-lite"/>
    </source>
</evidence>
<dbReference type="EMBL" id="X01204">
    <property type="protein sequence ID" value="CAA25623.1"/>
    <property type="molecule type" value="mRNA"/>
</dbReference>
<dbReference type="PIR" id="A02675">
    <property type="entry name" value="IRTR4"/>
</dbReference>
<dbReference type="Proteomes" id="UP000694395">
    <property type="component" value="Unplaced"/>
</dbReference>
<dbReference type="GO" id="GO:0000786">
    <property type="term" value="C:nucleosome"/>
    <property type="evidence" value="ECO:0007669"/>
    <property type="project" value="UniProtKB-KW"/>
</dbReference>
<dbReference type="GO" id="GO:0005634">
    <property type="term" value="C:nucleus"/>
    <property type="evidence" value="ECO:0007669"/>
    <property type="project" value="UniProtKB-SubCell"/>
</dbReference>
<dbReference type="GO" id="GO:0003677">
    <property type="term" value="F:DNA binding"/>
    <property type="evidence" value="ECO:0007669"/>
    <property type="project" value="UniProtKB-KW"/>
</dbReference>
<dbReference type="GO" id="GO:0030154">
    <property type="term" value="P:cell differentiation"/>
    <property type="evidence" value="ECO:0007669"/>
    <property type="project" value="UniProtKB-KW"/>
</dbReference>
<dbReference type="GO" id="GO:0030261">
    <property type="term" value="P:chromosome condensation"/>
    <property type="evidence" value="ECO:0007669"/>
    <property type="project" value="UniProtKB-KW"/>
</dbReference>
<dbReference type="GO" id="GO:0007283">
    <property type="term" value="P:spermatogenesis"/>
    <property type="evidence" value="ECO:0007669"/>
    <property type="project" value="UniProtKB-KW"/>
</dbReference>
<accession>P02333</accession>
<protein>
    <recommendedName>
        <fullName>Protamine PTP4</fullName>
    </recommendedName>
</protein>
<feature type="initiator methionine" description="Removed">
    <location>
        <position position="1"/>
    </location>
</feature>
<feature type="peptide" id="PRO_0000044309" description="Protamine PTP4">
    <location>
        <begin position="2"/>
        <end position="31"/>
    </location>
</feature>
<feature type="region of interest" description="Disordered" evidence="1">
    <location>
        <begin position="1"/>
        <end position="31"/>
    </location>
</feature>
<reference key="1">
    <citation type="journal article" date="1979" name="Nature">
        <title>Sequence divergence of rainbow trout protamine mRNAs; comparison of coding and non-coding nucleotide sequences in three protamine cDNA plasmids.</title>
        <authorList>
            <person name="Jenkins J.R."/>
        </authorList>
    </citation>
    <scope>NUCLEOTIDE SEQUENCE [MRNA]</scope>
</reference>
<proteinExistence type="evidence at transcript level"/>
<sequence>MPRRRRASRRIRRRRRPRVSRRRRGGRRRRR</sequence>
<organism>
    <name type="scientific">Oncorhynchus mykiss</name>
    <name type="common">Rainbow trout</name>
    <name type="synonym">Salmo gairdneri</name>
    <dbReference type="NCBI Taxonomy" id="8022"/>
    <lineage>
        <taxon>Eukaryota</taxon>
        <taxon>Metazoa</taxon>
        <taxon>Chordata</taxon>
        <taxon>Craniata</taxon>
        <taxon>Vertebrata</taxon>
        <taxon>Euteleostomi</taxon>
        <taxon>Actinopterygii</taxon>
        <taxon>Neopterygii</taxon>
        <taxon>Teleostei</taxon>
        <taxon>Protacanthopterygii</taxon>
        <taxon>Salmoniformes</taxon>
        <taxon>Salmonidae</taxon>
        <taxon>Salmoninae</taxon>
        <taxon>Oncorhynchus</taxon>
    </lineage>
</organism>